<gene>
    <name evidence="1" type="primary">atpA</name>
    <name type="ordered locus">MK1017</name>
</gene>
<name>AATA_METKA</name>
<comment type="function">
    <text evidence="1">Component of the A-type ATP synthase that produces ATP from ADP in the presence of a proton gradient across the membrane. The A chain is the catalytic subunit.</text>
</comment>
<comment type="catalytic activity">
    <reaction evidence="1">
        <text>ATP + H2O + 4 H(+)(in) = ADP + phosphate + 5 H(+)(out)</text>
        <dbReference type="Rhea" id="RHEA:57720"/>
        <dbReference type="ChEBI" id="CHEBI:15377"/>
        <dbReference type="ChEBI" id="CHEBI:15378"/>
        <dbReference type="ChEBI" id="CHEBI:30616"/>
        <dbReference type="ChEBI" id="CHEBI:43474"/>
        <dbReference type="ChEBI" id="CHEBI:456216"/>
        <dbReference type="EC" id="7.1.2.2"/>
    </reaction>
</comment>
<comment type="subunit">
    <text evidence="1">Has multiple subunits with at least A(3), B(3), C, D, E, F, H, I and proteolipid K(x).</text>
</comment>
<comment type="subcellular location">
    <subcellularLocation>
        <location evidence="1">Cell membrane</location>
        <topology evidence="1">Peripheral membrane protein</topology>
    </subcellularLocation>
</comment>
<comment type="similarity">
    <text evidence="1">Belongs to the ATPase alpha/beta chains family.</text>
</comment>
<protein>
    <recommendedName>
        <fullName evidence="1">A-type ATP synthase subunit A</fullName>
        <ecNumber evidence="1">7.1.2.2</ecNumber>
    </recommendedName>
</protein>
<organism>
    <name type="scientific">Methanopyrus kandleri (strain AV19 / DSM 6324 / JCM 9639 / NBRC 100938)</name>
    <dbReference type="NCBI Taxonomy" id="190192"/>
    <lineage>
        <taxon>Archaea</taxon>
        <taxon>Methanobacteriati</taxon>
        <taxon>Methanobacteriota</taxon>
        <taxon>Methanomada group</taxon>
        <taxon>Methanopyri</taxon>
        <taxon>Methanopyrales</taxon>
        <taxon>Methanopyraceae</taxon>
        <taxon>Methanopyrus</taxon>
    </lineage>
</organism>
<proteinExistence type="inferred from homology"/>
<sequence length="592" mass="66494">MSNSVKGEIVKIAGPVVEAVGCEGAKMYEVFRVGDEGLIGEVINIESDRATIQVYEETTGLQPGEPVKGTGELLSVELGPGLLTQIFDGIQRPLPEIRKEVGDFVERGILVSALDRKKKWEFTPKVKEGEKVEEGDVLGTVPETEFIEHKIMVPPGVSGEVIEIAADGEYTVEDTIAVIEDEEGEEHEVTMMQEWPVRKPRPYKRKLDPEEPLITGQRVIDTFFPVAKGGTAAIPGPFGSGKTVTQQQLAKWADAQVVVYIGCGERGNEMTEVLEDFPELEDPRTGRPLMERTILVANTSNMPVAAREACIYTGITMAEYYRDMGYDVALMADSTSRWAEALREISGRLEEMPGEEGYPAYLASRLAEFYERAGRVVCLGSDDRVGSVTVVGAVSPPGGDFSEPVTQNTLRIVKVFWALDSKLADRRHFPAINWLQSYSLYLDDVEKWWHEEIGGDWRELRDEAMEILQRESELEEIVQLVGPDALPESERLILEVARMIREDFLQQNAFHEVDTYCPPEKQYEMLKTILHFKERAEEAVDKGVPVDEILKLDVIDDIARMKVIPNEEAKEKIQEIRKKIDEQFEELIEEAS</sequence>
<accession>Q8TWL6</accession>
<evidence type="ECO:0000255" key="1">
    <source>
        <dbReference type="HAMAP-Rule" id="MF_00309"/>
    </source>
</evidence>
<dbReference type="EC" id="7.1.2.2" evidence="1"/>
<dbReference type="EMBL" id="AE009439">
    <property type="protein sequence ID" value="AAM02230.1"/>
    <property type="molecule type" value="Genomic_DNA"/>
</dbReference>
<dbReference type="RefSeq" id="WP_011019385.1">
    <property type="nucleotide sequence ID" value="NC_003551.1"/>
</dbReference>
<dbReference type="SMR" id="Q8TWL6"/>
<dbReference type="FunCoup" id="Q8TWL6">
    <property type="interactions" value="90"/>
</dbReference>
<dbReference type="STRING" id="190192.MK1017"/>
<dbReference type="PaxDb" id="190192-MK1017"/>
<dbReference type="EnsemblBacteria" id="AAM02230">
    <property type="protein sequence ID" value="AAM02230"/>
    <property type="gene ID" value="MK1017"/>
</dbReference>
<dbReference type="GeneID" id="1477118"/>
<dbReference type="KEGG" id="mka:MK1017"/>
<dbReference type="PATRIC" id="fig|190192.8.peg.1067"/>
<dbReference type="HOGENOM" id="CLU_008162_3_1_2"/>
<dbReference type="InParanoid" id="Q8TWL6"/>
<dbReference type="OrthoDB" id="115235at2157"/>
<dbReference type="Proteomes" id="UP000001826">
    <property type="component" value="Chromosome"/>
</dbReference>
<dbReference type="GO" id="GO:0005886">
    <property type="term" value="C:plasma membrane"/>
    <property type="evidence" value="ECO:0007669"/>
    <property type="project" value="UniProtKB-SubCell"/>
</dbReference>
<dbReference type="GO" id="GO:0033180">
    <property type="term" value="C:proton-transporting V-type ATPase, V1 domain"/>
    <property type="evidence" value="ECO:0007669"/>
    <property type="project" value="InterPro"/>
</dbReference>
<dbReference type="GO" id="GO:0005524">
    <property type="term" value="F:ATP binding"/>
    <property type="evidence" value="ECO:0007669"/>
    <property type="project" value="UniProtKB-UniRule"/>
</dbReference>
<dbReference type="GO" id="GO:0016887">
    <property type="term" value="F:ATP hydrolysis activity"/>
    <property type="evidence" value="ECO:0007669"/>
    <property type="project" value="InterPro"/>
</dbReference>
<dbReference type="GO" id="GO:0046933">
    <property type="term" value="F:proton-transporting ATP synthase activity, rotational mechanism"/>
    <property type="evidence" value="ECO:0007669"/>
    <property type="project" value="UniProtKB-UniRule"/>
</dbReference>
<dbReference type="GO" id="GO:0046961">
    <property type="term" value="F:proton-transporting ATPase activity, rotational mechanism"/>
    <property type="evidence" value="ECO:0007669"/>
    <property type="project" value="InterPro"/>
</dbReference>
<dbReference type="GO" id="GO:0042777">
    <property type="term" value="P:proton motive force-driven plasma membrane ATP synthesis"/>
    <property type="evidence" value="ECO:0007669"/>
    <property type="project" value="UniProtKB-UniRule"/>
</dbReference>
<dbReference type="CDD" id="cd18111">
    <property type="entry name" value="ATP-synt_V_A-type_alpha_C"/>
    <property type="match status" value="1"/>
</dbReference>
<dbReference type="CDD" id="cd18119">
    <property type="entry name" value="ATP-synt_V_A-type_alpha_N"/>
    <property type="match status" value="1"/>
</dbReference>
<dbReference type="CDD" id="cd01134">
    <property type="entry name" value="V_A-ATPase_A"/>
    <property type="match status" value="1"/>
</dbReference>
<dbReference type="FunFam" id="3.40.50.300:FF:000675">
    <property type="entry name" value="V-type ATP synthase alpha chain"/>
    <property type="match status" value="1"/>
</dbReference>
<dbReference type="FunFam" id="1.10.1140.10:FF:000002">
    <property type="entry name" value="V-type proton ATPase catalytic subunit A"/>
    <property type="match status" value="1"/>
</dbReference>
<dbReference type="FunFam" id="2.40.30.20:FF:000002">
    <property type="entry name" value="V-type proton ATPase catalytic subunit A"/>
    <property type="match status" value="1"/>
</dbReference>
<dbReference type="FunFam" id="2.40.50.100:FF:000008">
    <property type="entry name" value="V-type proton ATPase catalytic subunit A"/>
    <property type="match status" value="1"/>
</dbReference>
<dbReference type="Gene3D" id="2.40.30.20">
    <property type="match status" value="1"/>
</dbReference>
<dbReference type="Gene3D" id="2.40.50.100">
    <property type="match status" value="1"/>
</dbReference>
<dbReference type="Gene3D" id="1.10.1140.10">
    <property type="entry name" value="Bovine Mitochondrial F1-atpase, Atp Synthase Beta Chain, Chain D, domain 3"/>
    <property type="match status" value="1"/>
</dbReference>
<dbReference type="Gene3D" id="3.40.50.300">
    <property type="entry name" value="P-loop containing nucleotide triphosphate hydrolases"/>
    <property type="match status" value="1"/>
</dbReference>
<dbReference type="HAMAP" id="MF_00309">
    <property type="entry name" value="ATP_synth_A_arch"/>
    <property type="match status" value="1"/>
</dbReference>
<dbReference type="InterPro" id="IPR003593">
    <property type="entry name" value="AAA+_ATPase"/>
</dbReference>
<dbReference type="InterPro" id="IPR055190">
    <property type="entry name" value="ATP-synt_VA_C"/>
</dbReference>
<dbReference type="InterPro" id="IPR031686">
    <property type="entry name" value="ATP-synth_a_Xtn"/>
</dbReference>
<dbReference type="InterPro" id="IPR023366">
    <property type="entry name" value="ATP_synth_asu-like_sf"/>
</dbReference>
<dbReference type="InterPro" id="IPR005726">
    <property type="entry name" value="ATP_synth_asu_arc"/>
</dbReference>
<dbReference type="InterPro" id="IPR020003">
    <property type="entry name" value="ATPase_a/bsu_AS"/>
</dbReference>
<dbReference type="InterPro" id="IPR004100">
    <property type="entry name" value="ATPase_F1/V1/A1_a/bsu_N"/>
</dbReference>
<dbReference type="InterPro" id="IPR036121">
    <property type="entry name" value="ATPase_F1/V1/A1_a/bsu_N_sf"/>
</dbReference>
<dbReference type="InterPro" id="IPR000194">
    <property type="entry name" value="ATPase_F1/V1/A1_a/bsu_nucl-bd"/>
</dbReference>
<dbReference type="InterPro" id="IPR024034">
    <property type="entry name" value="ATPase_F1/V1_b/a_C"/>
</dbReference>
<dbReference type="InterPro" id="IPR005725">
    <property type="entry name" value="ATPase_V1-cplx_asu"/>
</dbReference>
<dbReference type="InterPro" id="IPR027417">
    <property type="entry name" value="P-loop_NTPase"/>
</dbReference>
<dbReference type="InterPro" id="IPR022878">
    <property type="entry name" value="V-ATPase_asu"/>
</dbReference>
<dbReference type="NCBIfam" id="TIGR01043">
    <property type="entry name" value="ATP_syn_A_arch"/>
    <property type="match status" value="1"/>
</dbReference>
<dbReference type="NCBIfam" id="NF003220">
    <property type="entry name" value="PRK04192.1"/>
    <property type="match status" value="1"/>
</dbReference>
<dbReference type="NCBIfam" id="TIGR01042">
    <property type="entry name" value="V-ATPase_V1_A"/>
    <property type="match status" value="1"/>
</dbReference>
<dbReference type="PANTHER" id="PTHR43607:SF1">
    <property type="entry name" value="H(+)-TRANSPORTING TWO-SECTOR ATPASE"/>
    <property type="match status" value="1"/>
</dbReference>
<dbReference type="PANTHER" id="PTHR43607">
    <property type="entry name" value="V-TYPE PROTON ATPASE CATALYTIC SUBUNIT A"/>
    <property type="match status" value="1"/>
</dbReference>
<dbReference type="Pfam" id="PF00006">
    <property type="entry name" value="ATP-synt_ab"/>
    <property type="match status" value="1"/>
</dbReference>
<dbReference type="Pfam" id="PF02874">
    <property type="entry name" value="ATP-synt_ab_N"/>
    <property type="match status" value="1"/>
</dbReference>
<dbReference type="Pfam" id="PF16886">
    <property type="entry name" value="ATP-synt_ab_Xtn"/>
    <property type="match status" value="1"/>
</dbReference>
<dbReference type="Pfam" id="PF22919">
    <property type="entry name" value="ATP-synt_VA_C"/>
    <property type="match status" value="1"/>
</dbReference>
<dbReference type="SMART" id="SM00382">
    <property type="entry name" value="AAA"/>
    <property type="match status" value="1"/>
</dbReference>
<dbReference type="SUPFAM" id="SSF47917">
    <property type="entry name" value="C-terminal domain of alpha and beta subunits of F1 ATP synthase"/>
    <property type="match status" value="1"/>
</dbReference>
<dbReference type="SUPFAM" id="SSF50615">
    <property type="entry name" value="N-terminal domain of alpha and beta subunits of F1 ATP synthase"/>
    <property type="match status" value="1"/>
</dbReference>
<dbReference type="SUPFAM" id="SSF52540">
    <property type="entry name" value="P-loop containing nucleoside triphosphate hydrolases"/>
    <property type="match status" value="1"/>
</dbReference>
<dbReference type="PROSITE" id="PS00152">
    <property type="entry name" value="ATPASE_ALPHA_BETA"/>
    <property type="match status" value="1"/>
</dbReference>
<feature type="chain" id="PRO_0000144600" description="A-type ATP synthase subunit A">
    <location>
        <begin position="1"/>
        <end position="592"/>
    </location>
</feature>
<feature type="binding site" evidence="1">
    <location>
        <begin position="236"/>
        <end position="243"/>
    </location>
    <ligand>
        <name>ATP</name>
        <dbReference type="ChEBI" id="CHEBI:30616"/>
    </ligand>
</feature>
<reference key="1">
    <citation type="journal article" date="2002" name="Proc. Natl. Acad. Sci. U.S.A.">
        <title>The complete genome of hyperthermophile Methanopyrus kandleri AV19 and monophyly of archaeal methanogens.</title>
        <authorList>
            <person name="Slesarev A.I."/>
            <person name="Mezhevaya K.V."/>
            <person name="Makarova K.S."/>
            <person name="Polushin N.N."/>
            <person name="Shcherbinina O.V."/>
            <person name="Shakhova V.V."/>
            <person name="Belova G.I."/>
            <person name="Aravind L."/>
            <person name="Natale D.A."/>
            <person name="Rogozin I.B."/>
            <person name="Tatusov R.L."/>
            <person name="Wolf Y.I."/>
            <person name="Stetter K.O."/>
            <person name="Malykh A.G."/>
            <person name="Koonin E.V."/>
            <person name="Kozyavkin S.A."/>
        </authorList>
    </citation>
    <scope>NUCLEOTIDE SEQUENCE [LARGE SCALE GENOMIC DNA]</scope>
    <source>
        <strain>AV19 / DSM 6324 / JCM 9639 / NBRC 100938</strain>
    </source>
</reference>
<keyword id="KW-0066">ATP synthesis</keyword>
<keyword id="KW-0067">ATP-binding</keyword>
<keyword id="KW-1003">Cell membrane</keyword>
<keyword id="KW-0375">Hydrogen ion transport</keyword>
<keyword id="KW-0406">Ion transport</keyword>
<keyword id="KW-0472">Membrane</keyword>
<keyword id="KW-0547">Nucleotide-binding</keyword>
<keyword id="KW-1185">Reference proteome</keyword>
<keyword id="KW-1278">Translocase</keyword>
<keyword id="KW-0813">Transport</keyword>